<keyword id="KW-0067">ATP-binding</keyword>
<keyword id="KW-0963">Cytoplasm</keyword>
<keyword id="KW-1015">Disulfide bond</keyword>
<keyword id="KW-0547">Nucleotide-binding</keyword>
<keyword id="KW-0694">RNA-binding</keyword>
<keyword id="KW-0808">Transferase</keyword>
<keyword id="KW-0819">tRNA processing</keyword>
<keyword id="KW-0820">tRNA-binding</keyword>
<proteinExistence type="inferred from homology"/>
<evidence type="ECO:0000255" key="1">
    <source>
        <dbReference type="HAMAP-Rule" id="MF_00144"/>
    </source>
</evidence>
<gene>
    <name evidence="1" type="primary">mnmA</name>
    <name type="ordered locus">BTH_I1257</name>
</gene>
<dbReference type="EC" id="2.8.1.13" evidence="1"/>
<dbReference type="EMBL" id="CP000086">
    <property type="protein sequence ID" value="ABC37142.1"/>
    <property type="molecule type" value="Genomic_DNA"/>
</dbReference>
<dbReference type="RefSeq" id="WP_009889157.1">
    <property type="nucleotide sequence ID" value="NC_007651.1"/>
</dbReference>
<dbReference type="SMR" id="Q2SZ45"/>
<dbReference type="GeneID" id="45121004"/>
<dbReference type="KEGG" id="bte:BTH_I1257"/>
<dbReference type="HOGENOM" id="CLU_035188_1_0_4"/>
<dbReference type="Proteomes" id="UP000001930">
    <property type="component" value="Chromosome I"/>
</dbReference>
<dbReference type="GO" id="GO:0005737">
    <property type="term" value="C:cytoplasm"/>
    <property type="evidence" value="ECO:0007669"/>
    <property type="project" value="UniProtKB-SubCell"/>
</dbReference>
<dbReference type="GO" id="GO:0005524">
    <property type="term" value="F:ATP binding"/>
    <property type="evidence" value="ECO:0007669"/>
    <property type="project" value="UniProtKB-KW"/>
</dbReference>
<dbReference type="GO" id="GO:0000049">
    <property type="term" value="F:tRNA binding"/>
    <property type="evidence" value="ECO:0007669"/>
    <property type="project" value="UniProtKB-KW"/>
</dbReference>
<dbReference type="GO" id="GO:0103016">
    <property type="term" value="F:tRNA-uridine 2-sulfurtransferase activity"/>
    <property type="evidence" value="ECO:0007669"/>
    <property type="project" value="UniProtKB-EC"/>
</dbReference>
<dbReference type="GO" id="GO:0002143">
    <property type="term" value="P:tRNA wobble position uridine thiolation"/>
    <property type="evidence" value="ECO:0007669"/>
    <property type="project" value="TreeGrafter"/>
</dbReference>
<dbReference type="CDD" id="cd01998">
    <property type="entry name" value="MnmA_TRMU-like"/>
    <property type="match status" value="1"/>
</dbReference>
<dbReference type="FunFam" id="2.30.30.280:FF:000001">
    <property type="entry name" value="tRNA-specific 2-thiouridylase MnmA"/>
    <property type="match status" value="1"/>
</dbReference>
<dbReference type="FunFam" id="2.40.30.10:FF:000023">
    <property type="entry name" value="tRNA-specific 2-thiouridylase MnmA"/>
    <property type="match status" value="1"/>
</dbReference>
<dbReference type="FunFam" id="3.40.50.620:FF:000004">
    <property type="entry name" value="tRNA-specific 2-thiouridylase MnmA"/>
    <property type="match status" value="1"/>
</dbReference>
<dbReference type="Gene3D" id="2.30.30.280">
    <property type="entry name" value="Adenine nucleotide alpha hydrolases-like domains"/>
    <property type="match status" value="1"/>
</dbReference>
<dbReference type="Gene3D" id="3.40.50.620">
    <property type="entry name" value="HUPs"/>
    <property type="match status" value="1"/>
</dbReference>
<dbReference type="Gene3D" id="2.40.30.10">
    <property type="entry name" value="Translation factors"/>
    <property type="match status" value="1"/>
</dbReference>
<dbReference type="HAMAP" id="MF_00144">
    <property type="entry name" value="tRNA_thiouridyl_MnmA"/>
    <property type="match status" value="1"/>
</dbReference>
<dbReference type="InterPro" id="IPR004506">
    <property type="entry name" value="MnmA-like"/>
</dbReference>
<dbReference type="InterPro" id="IPR046885">
    <property type="entry name" value="MnmA-like_C"/>
</dbReference>
<dbReference type="InterPro" id="IPR046884">
    <property type="entry name" value="MnmA-like_central"/>
</dbReference>
<dbReference type="InterPro" id="IPR023382">
    <property type="entry name" value="MnmA-like_central_sf"/>
</dbReference>
<dbReference type="InterPro" id="IPR014729">
    <property type="entry name" value="Rossmann-like_a/b/a_fold"/>
</dbReference>
<dbReference type="NCBIfam" id="NF001138">
    <property type="entry name" value="PRK00143.1"/>
    <property type="match status" value="1"/>
</dbReference>
<dbReference type="NCBIfam" id="TIGR00420">
    <property type="entry name" value="trmU"/>
    <property type="match status" value="1"/>
</dbReference>
<dbReference type="PANTHER" id="PTHR11933:SF5">
    <property type="entry name" value="MITOCHONDRIAL TRNA-SPECIFIC 2-THIOURIDYLASE 1"/>
    <property type="match status" value="1"/>
</dbReference>
<dbReference type="PANTHER" id="PTHR11933">
    <property type="entry name" value="TRNA 5-METHYLAMINOMETHYL-2-THIOURIDYLATE -METHYLTRANSFERASE"/>
    <property type="match status" value="1"/>
</dbReference>
<dbReference type="Pfam" id="PF03054">
    <property type="entry name" value="tRNA_Me_trans"/>
    <property type="match status" value="1"/>
</dbReference>
<dbReference type="Pfam" id="PF20258">
    <property type="entry name" value="tRNA_Me_trans_C"/>
    <property type="match status" value="1"/>
</dbReference>
<dbReference type="Pfam" id="PF20259">
    <property type="entry name" value="tRNA_Me_trans_M"/>
    <property type="match status" value="1"/>
</dbReference>
<dbReference type="SUPFAM" id="SSF52402">
    <property type="entry name" value="Adenine nucleotide alpha hydrolases-like"/>
    <property type="match status" value="1"/>
</dbReference>
<reference key="1">
    <citation type="journal article" date="2005" name="BMC Genomics">
        <title>Bacterial genome adaptation to niches: divergence of the potential virulence genes in three Burkholderia species of different survival strategies.</title>
        <authorList>
            <person name="Kim H.S."/>
            <person name="Schell M.A."/>
            <person name="Yu Y."/>
            <person name="Ulrich R.L."/>
            <person name="Sarria S.H."/>
            <person name="Nierman W.C."/>
            <person name="DeShazer D."/>
        </authorList>
    </citation>
    <scope>NUCLEOTIDE SEQUENCE [LARGE SCALE GENOMIC DNA]</scope>
    <source>
        <strain>ATCC 700388 / DSM 13276 / CCUG 48851 / CIP 106301 / E264</strain>
    </source>
</reference>
<feature type="chain" id="PRO_0000349564" description="tRNA-specific 2-thiouridylase MnmA">
    <location>
        <begin position="1"/>
        <end position="386"/>
    </location>
</feature>
<feature type="region of interest" description="Interaction with target base in tRNA" evidence="1">
    <location>
        <begin position="95"/>
        <end position="97"/>
    </location>
</feature>
<feature type="region of interest" description="Interaction with tRNA" evidence="1">
    <location>
        <begin position="146"/>
        <end position="148"/>
    </location>
</feature>
<feature type="region of interest" description="Interaction with tRNA" evidence="1">
    <location>
        <begin position="308"/>
        <end position="309"/>
    </location>
</feature>
<feature type="active site" description="Nucleophile" evidence="1">
    <location>
        <position position="100"/>
    </location>
</feature>
<feature type="active site" description="Cysteine persulfide intermediate" evidence="1">
    <location>
        <position position="196"/>
    </location>
</feature>
<feature type="binding site" evidence="1">
    <location>
        <begin position="9"/>
        <end position="16"/>
    </location>
    <ligand>
        <name>ATP</name>
        <dbReference type="ChEBI" id="CHEBI:30616"/>
    </ligand>
</feature>
<feature type="binding site" evidence="1">
    <location>
        <position position="35"/>
    </location>
    <ligand>
        <name>ATP</name>
        <dbReference type="ChEBI" id="CHEBI:30616"/>
    </ligand>
</feature>
<feature type="binding site" evidence="1">
    <location>
        <position position="124"/>
    </location>
    <ligand>
        <name>ATP</name>
        <dbReference type="ChEBI" id="CHEBI:30616"/>
    </ligand>
</feature>
<feature type="site" description="Interaction with tRNA" evidence="1">
    <location>
        <position position="125"/>
    </location>
</feature>
<feature type="site" description="Interaction with tRNA" evidence="1">
    <location>
        <position position="347"/>
    </location>
</feature>
<feature type="disulfide bond" description="Alternate" evidence="1">
    <location>
        <begin position="100"/>
        <end position="196"/>
    </location>
</feature>
<comment type="function">
    <text evidence="1">Catalyzes the 2-thiolation of uridine at the wobble position (U34) of tRNA, leading to the formation of s(2)U34.</text>
</comment>
<comment type="catalytic activity">
    <reaction evidence="1">
        <text>S-sulfanyl-L-cysteinyl-[protein] + uridine(34) in tRNA + AH2 + ATP = 2-thiouridine(34) in tRNA + L-cysteinyl-[protein] + A + AMP + diphosphate + H(+)</text>
        <dbReference type="Rhea" id="RHEA:47032"/>
        <dbReference type="Rhea" id="RHEA-COMP:10131"/>
        <dbReference type="Rhea" id="RHEA-COMP:11726"/>
        <dbReference type="Rhea" id="RHEA-COMP:11727"/>
        <dbReference type="Rhea" id="RHEA-COMP:11728"/>
        <dbReference type="ChEBI" id="CHEBI:13193"/>
        <dbReference type="ChEBI" id="CHEBI:15378"/>
        <dbReference type="ChEBI" id="CHEBI:17499"/>
        <dbReference type="ChEBI" id="CHEBI:29950"/>
        <dbReference type="ChEBI" id="CHEBI:30616"/>
        <dbReference type="ChEBI" id="CHEBI:33019"/>
        <dbReference type="ChEBI" id="CHEBI:61963"/>
        <dbReference type="ChEBI" id="CHEBI:65315"/>
        <dbReference type="ChEBI" id="CHEBI:87170"/>
        <dbReference type="ChEBI" id="CHEBI:456215"/>
        <dbReference type="EC" id="2.8.1.13"/>
    </reaction>
</comment>
<comment type="subcellular location">
    <subcellularLocation>
        <location evidence="1">Cytoplasm</location>
    </subcellularLocation>
</comment>
<comment type="similarity">
    <text evidence="1">Belongs to the MnmA/TRMU family.</text>
</comment>
<name>MNMA_BURTA</name>
<accession>Q2SZ45</accession>
<organism>
    <name type="scientific">Burkholderia thailandensis (strain ATCC 700388 / DSM 13276 / CCUG 48851 / CIP 106301 / E264)</name>
    <dbReference type="NCBI Taxonomy" id="271848"/>
    <lineage>
        <taxon>Bacteria</taxon>
        <taxon>Pseudomonadati</taxon>
        <taxon>Pseudomonadota</taxon>
        <taxon>Betaproteobacteria</taxon>
        <taxon>Burkholderiales</taxon>
        <taxon>Burkholderiaceae</taxon>
        <taxon>Burkholderia</taxon>
        <taxon>pseudomallei group</taxon>
    </lineage>
</organism>
<sequence length="386" mass="41997">MTKRRVVVGMSGGVDSSVTAWLLKEQGYDVIGLFMKNWEDDDDGEYCSTRQDWIDVVSVADLIGIDVEAVNFAAEYKDRVFAEFLREYSAGRTPNPDVLCNAEIKFKAFLDHAMSLGAETIATGHYARVRERDGRFELLKAFDHTKDQSYFLHRLNQAQLSKTMFPLGEIPKTKVREIAAQIGLPNAKKKDSTGICFIGERPFRDFLNRYLPTQPGPMKTPDGKTVGEHIGLAFYTFGQRKGIGLGGSKDGSGEPWFVAAKDIASNTLYVVQGHDHPWLRSRELVAGNVSWVAGEPPSDGARCGAKTRYRQADAPCAFSSAAPGEAAGGERFSLVFDEPQWAVTPGQSAVLYDGDVCLGGGIIEAAATGRPDAAPASCESALAEAR</sequence>
<protein>
    <recommendedName>
        <fullName evidence="1">tRNA-specific 2-thiouridylase MnmA</fullName>
        <ecNumber evidence="1">2.8.1.13</ecNumber>
    </recommendedName>
</protein>